<keyword id="KW-0025">Alternative splicing</keyword>
<keyword id="KW-0130">Cell adhesion</keyword>
<keyword id="KW-0903">Direct protein sequencing</keyword>
<keyword id="KW-1015">Disulfide bond</keyword>
<keyword id="KW-0245">EGF-like domain</keyword>
<keyword id="KW-0325">Glycoprotein</keyword>
<keyword id="KW-0353">Hemolymph clotting</keyword>
<keyword id="KW-0378">Hydrolase</keyword>
<keyword id="KW-0430">Lectin</keyword>
<keyword id="KW-0645">Protease</keyword>
<keyword id="KW-0677">Repeat</keyword>
<keyword id="KW-0964">Secreted</keyword>
<keyword id="KW-0720">Serine protease</keyword>
<keyword id="KW-0732">Signal</keyword>
<keyword id="KW-0768">Sushi</keyword>
<dbReference type="EC" id="3.4.21.84" evidence="10 11 12 13"/>
<dbReference type="EMBL" id="D90271">
    <property type="protein sequence ID" value="BAA14315.1"/>
    <property type="molecule type" value="mRNA"/>
</dbReference>
<dbReference type="EMBL" id="D90272">
    <property type="protein sequence ID" value="BAA14316.1"/>
    <property type="molecule type" value="mRNA"/>
</dbReference>
<dbReference type="PIR" id="A38738">
    <property type="entry name" value="A38738"/>
</dbReference>
<dbReference type="SMR" id="P28175"/>
<dbReference type="MEROPS" id="S01.219"/>
<dbReference type="iPTMnet" id="P28175"/>
<dbReference type="KEGG" id="ag:BAA14315"/>
<dbReference type="GO" id="GO:0005576">
    <property type="term" value="C:extracellular region"/>
    <property type="evidence" value="ECO:0007669"/>
    <property type="project" value="UniProtKB-SubCell"/>
</dbReference>
<dbReference type="GO" id="GO:0030246">
    <property type="term" value="F:carbohydrate binding"/>
    <property type="evidence" value="ECO:0007669"/>
    <property type="project" value="UniProtKB-KW"/>
</dbReference>
<dbReference type="GO" id="GO:0004252">
    <property type="term" value="F:serine-type endopeptidase activity"/>
    <property type="evidence" value="ECO:0000314"/>
    <property type="project" value="UniProtKB"/>
</dbReference>
<dbReference type="GO" id="GO:0007155">
    <property type="term" value="P:cell adhesion"/>
    <property type="evidence" value="ECO:0007669"/>
    <property type="project" value="UniProtKB-KW"/>
</dbReference>
<dbReference type="GO" id="GO:0042381">
    <property type="term" value="P:hemolymph coagulation"/>
    <property type="evidence" value="ECO:0000314"/>
    <property type="project" value="UniProtKB"/>
</dbReference>
<dbReference type="GO" id="GO:0016485">
    <property type="term" value="P:protein processing"/>
    <property type="evidence" value="ECO:0000314"/>
    <property type="project" value="UniProtKB"/>
</dbReference>
<dbReference type="CDD" id="cd00033">
    <property type="entry name" value="CCP"/>
    <property type="match status" value="5"/>
</dbReference>
<dbReference type="CDD" id="cd00037">
    <property type="entry name" value="CLECT"/>
    <property type="match status" value="1"/>
</dbReference>
<dbReference type="CDD" id="cd00055">
    <property type="entry name" value="EGF_Lam"/>
    <property type="match status" value="1"/>
</dbReference>
<dbReference type="CDD" id="cd00190">
    <property type="entry name" value="Tryp_SPc"/>
    <property type="match status" value="1"/>
</dbReference>
<dbReference type="FunFam" id="2.40.10.10:FF:000120">
    <property type="entry name" value="Putative serine protease"/>
    <property type="match status" value="1"/>
</dbReference>
<dbReference type="Gene3D" id="2.10.70.10">
    <property type="entry name" value="Complement Module, domain 1"/>
    <property type="match status" value="5"/>
</dbReference>
<dbReference type="Gene3D" id="2.170.130.20">
    <property type="entry name" value="LCCL-like domain"/>
    <property type="match status" value="1"/>
</dbReference>
<dbReference type="Gene3D" id="3.10.100.10">
    <property type="entry name" value="Mannose-Binding Protein A, subunit A"/>
    <property type="match status" value="1"/>
</dbReference>
<dbReference type="Gene3D" id="2.170.300.10">
    <property type="entry name" value="Tie2 ligand-binding domain superfamily"/>
    <property type="match status" value="1"/>
</dbReference>
<dbReference type="Gene3D" id="2.40.10.10">
    <property type="entry name" value="Trypsin-like serine proteases"/>
    <property type="match status" value="1"/>
</dbReference>
<dbReference type="InterPro" id="IPR001304">
    <property type="entry name" value="C-type_lectin-like"/>
</dbReference>
<dbReference type="InterPro" id="IPR016186">
    <property type="entry name" value="C-type_lectin-like/link_sf"/>
</dbReference>
<dbReference type="InterPro" id="IPR016187">
    <property type="entry name" value="CTDL_fold"/>
</dbReference>
<dbReference type="InterPro" id="IPR000742">
    <property type="entry name" value="EGF-like_dom"/>
</dbReference>
<dbReference type="InterPro" id="IPR004043">
    <property type="entry name" value="LCCL"/>
</dbReference>
<dbReference type="InterPro" id="IPR036609">
    <property type="entry name" value="LCCL_sf"/>
</dbReference>
<dbReference type="InterPro" id="IPR002049">
    <property type="entry name" value="LE_dom"/>
</dbReference>
<dbReference type="InterPro" id="IPR009003">
    <property type="entry name" value="Peptidase_S1_PA"/>
</dbReference>
<dbReference type="InterPro" id="IPR043504">
    <property type="entry name" value="Peptidase_S1_PA_chymotrypsin"/>
</dbReference>
<dbReference type="InterPro" id="IPR001314">
    <property type="entry name" value="Peptidase_S1A"/>
</dbReference>
<dbReference type="InterPro" id="IPR035976">
    <property type="entry name" value="Sushi/SCR/CCP_sf"/>
</dbReference>
<dbReference type="InterPro" id="IPR000436">
    <property type="entry name" value="Sushi_SCR_CCP_dom"/>
</dbReference>
<dbReference type="InterPro" id="IPR001254">
    <property type="entry name" value="Trypsin_dom"/>
</dbReference>
<dbReference type="InterPro" id="IPR018114">
    <property type="entry name" value="TRYPSIN_HIS"/>
</dbReference>
<dbReference type="InterPro" id="IPR033116">
    <property type="entry name" value="TRYPSIN_SER"/>
</dbReference>
<dbReference type="PANTHER" id="PTHR46393:SF7">
    <property type="entry name" value="COMPLEMENT C2"/>
    <property type="match status" value="1"/>
</dbReference>
<dbReference type="PANTHER" id="PTHR46393">
    <property type="entry name" value="SUSHI DOMAIN-CONTAINING PROTEIN"/>
    <property type="match status" value="1"/>
</dbReference>
<dbReference type="Pfam" id="PF03815">
    <property type="entry name" value="LCCL"/>
    <property type="match status" value="1"/>
</dbReference>
<dbReference type="Pfam" id="PF00059">
    <property type="entry name" value="Lectin_C"/>
    <property type="match status" value="1"/>
</dbReference>
<dbReference type="Pfam" id="PF00084">
    <property type="entry name" value="Sushi"/>
    <property type="match status" value="5"/>
</dbReference>
<dbReference type="Pfam" id="PF00089">
    <property type="entry name" value="Trypsin"/>
    <property type="match status" value="1"/>
</dbReference>
<dbReference type="PRINTS" id="PR00722">
    <property type="entry name" value="CHYMOTRYPSIN"/>
</dbReference>
<dbReference type="SMART" id="SM00032">
    <property type="entry name" value="CCP"/>
    <property type="match status" value="5"/>
</dbReference>
<dbReference type="SMART" id="SM00034">
    <property type="entry name" value="CLECT"/>
    <property type="match status" value="1"/>
</dbReference>
<dbReference type="SMART" id="SM00603">
    <property type="entry name" value="LCCL"/>
    <property type="match status" value="1"/>
</dbReference>
<dbReference type="SMART" id="SM00020">
    <property type="entry name" value="Tryp_SPc"/>
    <property type="match status" value="1"/>
</dbReference>
<dbReference type="SUPFAM" id="SSF56436">
    <property type="entry name" value="C-type lectin-like"/>
    <property type="match status" value="1"/>
</dbReference>
<dbReference type="SUPFAM" id="SSF57535">
    <property type="entry name" value="Complement control module/SCR domain"/>
    <property type="match status" value="5"/>
</dbReference>
<dbReference type="SUPFAM" id="SSF69848">
    <property type="entry name" value="LCCL domain"/>
    <property type="match status" value="1"/>
</dbReference>
<dbReference type="SUPFAM" id="SSF50494">
    <property type="entry name" value="Trypsin-like serine proteases"/>
    <property type="match status" value="1"/>
</dbReference>
<dbReference type="PROSITE" id="PS50041">
    <property type="entry name" value="C_TYPE_LECTIN_2"/>
    <property type="match status" value="1"/>
</dbReference>
<dbReference type="PROSITE" id="PS00022">
    <property type="entry name" value="EGF_1"/>
    <property type="match status" value="1"/>
</dbReference>
<dbReference type="PROSITE" id="PS50026">
    <property type="entry name" value="EGF_3"/>
    <property type="match status" value="1"/>
</dbReference>
<dbReference type="PROSITE" id="PS50820">
    <property type="entry name" value="LCCL"/>
    <property type="match status" value="1"/>
</dbReference>
<dbReference type="PROSITE" id="PS50923">
    <property type="entry name" value="SUSHI"/>
    <property type="match status" value="5"/>
</dbReference>
<dbReference type="PROSITE" id="PS50240">
    <property type="entry name" value="TRYPSIN_DOM"/>
    <property type="match status" value="1"/>
</dbReference>
<dbReference type="PROSITE" id="PS00134">
    <property type="entry name" value="TRYPSIN_HIS"/>
    <property type="match status" value="1"/>
</dbReference>
<dbReference type="PROSITE" id="PS00135">
    <property type="entry name" value="TRYPSIN_SER"/>
    <property type="match status" value="1"/>
</dbReference>
<proteinExistence type="evidence at protein level"/>
<comment type="function">
    <text evidence="10">This enzyme is closely associated with an endotoxin-sensitive hemolymph coagulation system which may play important roles in both hemostasis and host defense mechanisms (PubMed:3512266). Its active form catalyzes the activation of clotting factor B (PubMed:3512266).</text>
</comment>
<comment type="catalytic activity">
    <reaction evidence="10 11 12 13">
        <text>Selective cleavage of 103-Arg-|-Ser-104 and 124-Ile-|-Ile-125 bonds in Limulus clotting factor B to form activated factor B. Cleavage of -Pro-Arg-|-Xaa- bonds in synthetic substrates.</text>
        <dbReference type="EC" id="3.4.21.84"/>
    </reaction>
</comment>
<comment type="activity regulation">
    <text evidence="10 11 12 13">Activated by Gram-negative bacterial lipopolysaccharides (PubMed:3512266). Inhibited by intracellular coagulation inhibitor 1/LICI-1 and to a lesser extent by intracellular coagulation inhibitors 2/LICI-2 and 3/LICI-3 (PubMed:7822280, PubMed:8276848, PubMed:8798603). Inhibited by the small molecule diisopropyl fluorophosphate (DFP) (PubMed:3512266).</text>
</comment>
<comment type="subunit">
    <text evidence="9 10 11 12">Heterodimer of a light chain and a heavy chain linked by a disulfide bond (PubMed:3308457, PubMed:3512266). Forms a covalent heterodimer with intracellular coagulation inhibitor 1/LICI-1 (PubMed:8276848). Forms a covalent heterodimer with intracellular coagulation inhibitor 2/LICI-2 (PubMed:7822280).</text>
</comment>
<comment type="subcellular location">
    <subcellularLocation>
        <location evidence="17">Secreted</location>
    </subcellularLocation>
    <text evidence="8">Secreted in hemolymph (PubMed:2007602). Localizes in large granules of hemocytes (PubMed:2007602).</text>
</comment>
<comment type="alternative products">
    <event type="alternative splicing"/>
    <isoform>
        <id>P28175-1</id>
        <name evidence="14">Long</name>
        <sequence type="displayed"/>
    </isoform>
    <isoform>
        <id>P28175-2</id>
        <name evidence="14">Short</name>
        <sequence type="described" ref="VSP_005413 VSP_005414"/>
    </isoform>
</comment>
<comment type="tissue specificity">
    <text evidence="8 10">Expressed in hemocytes (at protein level).</text>
</comment>
<comment type="PTM">
    <text evidence="10">N-glycosylated.</text>
</comment>
<comment type="PTM">
    <text evidence="9 10">Lipopolysaccharide (LPS) activates clotting factor C by inducing the proteolytic cleavage of the clotting factor C light chain into clotting factor C chains A and B (PubMed:3308457, PubMed:3512266). Clotting factor C chains heavy, A and B remain associated via interchain disulfide bonds (PubMed:3512266).</text>
</comment>
<comment type="similarity">
    <text evidence="6">Belongs to the peptidase S1 family.</text>
</comment>
<evidence type="ECO:0000250" key="1"/>
<evidence type="ECO:0000255" key="2"/>
<evidence type="ECO:0000255" key="3">
    <source>
        <dbReference type="PROSITE-ProRule" id="PRU00040"/>
    </source>
</evidence>
<evidence type="ECO:0000255" key="4">
    <source>
        <dbReference type="PROSITE-ProRule" id="PRU00076"/>
    </source>
</evidence>
<evidence type="ECO:0000255" key="5">
    <source>
        <dbReference type="PROSITE-ProRule" id="PRU00123"/>
    </source>
</evidence>
<evidence type="ECO:0000255" key="6">
    <source>
        <dbReference type="PROSITE-ProRule" id="PRU00274"/>
    </source>
</evidence>
<evidence type="ECO:0000255" key="7">
    <source>
        <dbReference type="PROSITE-ProRule" id="PRU00302"/>
    </source>
</evidence>
<evidence type="ECO:0000269" key="8">
    <source>
    </source>
</evidence>
<evidence type="ECO:0000269" key="9">
    <source>
    </source>
</evidence>
<evidence type="ECO:0000269" key="10">
    <source>
    </source>
</evidence>
<evidence type="ECO:0000269" key="11">
    <source>
    </source>
</evidence>
<evidence type="ECO:0000269" key="12">
    <source>
    </source>
</evidence>
<evidence type="ECO:0000269" key="13">
    <source>
    </source>
</evidence>
<evidence type="ECO:0000303" key="14">
    <source>
    </source>
</evidence>
<evidence type="ECO:0000303" key="15">
    <source>
    </source>
</evidence>
<evidence type="ECO:0000303" key="16">
    <source>
    </source>
</evidence>
<evidence type="ECO:0000305" key="17"/>
<organism>
    <name type="scientific">Tachypleus tridentatus</name>
    <name type="common">Japanese horseshoe crab</name>
    <dbReference type="NCBI Taxonomy" id="6853"/>
    <lineage>
        <taxon>Eukaryota</taxon>
        <taxon>Metazoa</taxon>
        <taxon>Ecdysozoa</taxon>
        <taxon>Arthropoda</taxon>
        <taxon>Chelicerata</taxon>
        <taxon>Merostomata</taxon>
        <taxon>Xiphosura</taxon>
        <taxon>Limulidae</taxon>
        <taxon>Tachypleus</taxon>
    </lineage>
</organism>
<name>CFC_TACTR</name>
<reference key="1">
    <citation type="journal article" date="1991" name="J. Biol. Chem.">
        <title>Limulus factor C. An endotoxin-sensitive serine protease zymogen with a mosaic structure of complement-like, epidermal growth factor-like, and lectin-like domains.</title>
        <authorList>
            <person name="Muta T."/>
            <person name="Miyata T."/>
            <person name="Misumi Y."/>
            <person name="Tokunaga F."/>
            <person name="Nakamura T."/>
            <person name="Toh Y."/>
            <person name="Ikehara Y."/>
            <person name="Iwanaga S."/>
        </authorList>
    </citation>
    <scope>NUCLEOTIDE SEQUENCE [MRNA] (ISOFORMS LONG AND SHORT)</scope>
    <scope>PARTIAL PROTEIN SEQUENCE</scope>
    <scope>SUBCELLULAR LOCATION</scope>
    <scope>TISSUE SPECIFICITY</scope>
</reference>
<reference key="2">
    <citation type="journal article" date="1987" name="Eur. J. Biochem.">
        <title>Lipopolysaccharide-sensitive serine-protease zymogen (factor C) of horseshoe crab hemocytes. Identification and alignment of proteolytic fragments produced during the activation show that it is a novel type of serine protease.</title>
        <authorList>
            <person name="Tokunaga F."/>
            <person name="Miyata T."/>
            <person name="Nakamura T."/>
            <person name="Morita T."/>
            <person name="Kuma K."/>
            <person name="Miyata T."/>
            <person name="Iwanaga S."/>
        </authorList>
    </citation>
    <scope>PARTIAL PROTEIN SEQUENCE (ISOFORM LONG)</scope>
    <scope>SUBUNIT</scope>
    <scope>PROTEOLYTIC CLEAVAGE</scope>
    <scope>GLYCOSYLATION AT ASN-767</scope>
</reference>
<reference key="3">
    <citation type="journal article" date="1986" name="Eur. J. Biochem.">
        <title>Lipopolysaccharide-sensitive serine-protease zymogen (factor C) found in Limulus hemocytes. Isolation and characterization.</title>
        <authorList>
            <person name="Nakamura T."/>
            <person name="Morita T."/>
            <person name="Iwanaga S."/>
        </authorList>
    </citation>
    <scope>FUNCTION</scope>
    <scope>CATALYTIC ACTIVITY</scope>
    <scope>ACTIVITY REGULATION</scope>
    <scope>SUBUNIT</scope>
    <scope>TISSUE SPECIFICITY</scope>
    <scope>GLYCOSYLATION</scope>
    <scope>PROTEOLYTIC CLEAVAGE</scope>
    <scope>DISULFIDE BOND</scope>
</reference>
<reference key="4">
    <citation type="journal article" date="1994" name="J. Biol. Chem.">
        <title>A Limulus intracellular coagulation inhibitor with characteristics of the serpin superfamily. Purification, characterization, and cDNA cloning.</title>
        <authorList>
            <person name="Miura Y."/>
            <person name="Kawabata S."/>
            <person name="Iwanaga S."/>
        </authorList>
    </citation>
    <scope>CATALYTIC ACTIVITY</scope>
    <scope>ACTIVITY REGULATION</scope>
    <scope>SUBUNIT</scope>
</reference>
<reference key="5">
    <citation type="journal article" date="1995" name="J. Biol. Chem.">
        <title>A limulus intracellular coagulation inhibitor type 2. Purification, characterization, cDNA cloning, and tissue localization.</title>
        <authorList>
            <person name="Miura Y."/>
            <person name="Kawabata S."/>
            <person name="Wakamiya Y."/>
            <person name="Nakamura T."/>
            <person name="Iwanaga S."/>
        </authorList>
    </citation>
    <scope>CATALYTIC ACTIVITY</scope>
    <scope>ACTIVITY REGULATION</scope>
    <scope>SUBUNIT</scope>
</reference>
<reference key="6">
    <citation type="journal article" date="1996" name="J. Biol. Chem.">
        <title>Limulus intracellular coagulation inhibitor type 3. Purification, characterization, cDNA cloning, and tissue localization.</title>
        <authorList>
            <person name="Agarwala K.L."/>
            <person name="Kawabata S."/>
            <person name="Miura Y."/>
            <person name="Kuroki Y."/>
            <person name="Iwanaga S."/>
        </authorList>
    </citation>
    <scope>CATALYTIC ACTIVITY</scope>
    <scope>ACTIVITY REGULATION</scope>
</reference>
<protein>
    <recommendedName>
        <fullName>Clotting factor C</fullName>
        <shortName>FC</shortName>
        <ecNumber evidence="10 11 12 13">3.4.21.84</ecNumber>
    </recommendedName>
    <alternativeName>
        <fullName evidence="14">Limulus factor C</fullName>
    </alternativeName>
    <component>
        <recommendedName>
            <fullName evidence="16">Clotting factor C heavy chain</fullName>
        </recommendedName>
    </component>
    <component>
        <recommendedName>
            <fullName evidence="16">Clotting factor C light chain</fullName>
        </recommendedName>
    </component>
    <component>
        <recommendedName>
            <fullName evidence="15">Clotting factor C chain A</fullName>
        </recommendedName>
    </component>
    <component>
        <recommendedName>
            <fullName evidence="15">Clotting factor C chain B</fullName>
        </recommendedName>
    </component>
</protein>
<accession>P28175</accession>
<feature type="signal peptide">
    <location>
        <begin position="1"/>
        <end position="25"/>
    </location>
</feature>
<feature type="chain" id="PRO_0000028435" description="Clotting factor C">
    <location>
        <begin position="26"/>
        <end position="1019"/>
    </location>
</feature>
<feature type="chain" id="PRO_0000028436" description="Clotting factor C heavy chain">
    <location>
        <begin position="26"/>
        <end position="690"/>
    </location>
</feature>
<feature type="chain" id="PRO_0000028437" description="Clotting factor C light chain">
    <location>
        <begin position="691"/>
        <end position="1019"/>
    </location>
</feature>
<feature type="chain" id="PRO_0000028438" description="Clotting factor C chain A" evidence="9">
    <location>
        <begin position="691"/>
        <end position="762"/>
    </location>
</feature>
<feature type="chain" id="PRO_0000028439" description="Clotting factor C chain B" evidence="9">
    <location>
        <begin position="763"/>
        <end position="1019"/>
    </location>
</feature>
<feature type="domain" description="EGF-like" evidence="4">
    <location>
        <begin position="102"/>
        <end position="137"/>
    </location>
</feature>
<feature type="domain" description="Sushi 1" evidence="7">
    <location>
        <begin position="140"/>
        <end position="197"/>
    </location>
</feature>
<feature type="domain" description="Sushi 2" evidence="7">
    <location>
        <begin position="198"/>
        <end position="256"/>
    </location>
</feature>
<feature type="domain" description="Sushi 3" evidence="7">
    <location>
        <begin position="258"/>
        <end position="323"/>
    </location>
</feature>
<feature type="domain" description="LCCL" evidence="5">
    <location>
        <begin position="325"/>
        <end position="421"/>
    </location>
</feature>
<feature type="domain" description="C-type lectin" evidence="3">
    <location>
        <begin position="436"/>
        <end position="568"/>
    </location>
</feature>
<feature type="domain" description="Sushi 4" evidence="7">
    <location>
        <begin position="574"/>
        <end position="636"/>
    </location>
</feature>
<feature type="domain" description="Sushi 5" evidence="7">
    <location>
        <begin position="689"/>
        <end position="750"/>
    </location>
</feature>
<feature type="domain" description="Peptidase S1" evidence="6">
    <location>
        <begin position="763"/>
        <end position="1019"/>
    </location>
</feature>
<feature type="active site" description="Charge relay system" evidence="6">
    <location>
        <position position="809"/>
    </location>
</feature>
<feature type="active site" description="Charge relay system" evidence="6">
    <location>
        <position position="865"/>
    </location>
</feature>
<feature type="active site" description="Charge relay system" evidence="6">
    <location>
        <position position="966"/>
    </location>
</feature>
<feature type="binding site" evidence="1">
    <location>
        <position position="960"/>
    </location>
    <ligand>
        <name>substrate</name>
    </ligand>
</feature>
<feature type="glycosylation site" description="N-linked (GlcNAc...) asparagine" evidence="2">
    <location>
        <position position="523"/>
    </location>
</feature>
<feature type="glycosylation site" description="N-linked (GlcNAc...) asparagine" evidence="2">
    <location>
        <position position="534"/>
    </location>
</feature>
<feature type="glycosylation site" description="N-linked (GlcNAc...) asparagine" evidence="2">
    <location>
        <position position="624"/>
    </location>
</feature>
<feature type="glycosylation site" description="N-linked (GlcNAc...) asparagine" evidence="2">
    <location>
        <position position="740"/>
    </location>
</feature>
<feature type="glycosylation site" description="N-linked (GlcNAc...) asparagine" evidence="9">
    <location>
        <position position="767"/>
    </location>
</feature>
<feature type="glycosylation site" description="N-linked (GlcNAc...) asparagine" evidence="2">
    <location>
        <position position="912"/>
    </location>
</feature>
<feature type="disulfide bond" evidence="4">
    <location>
        <begin position="110"/>
        <end position="118"/>
    </location>
</feature>
<feature type="disulfide bond" evidence="4">
    <location>
        <begin position="112"/>
        <end position="125"/>
    </location>
</feature>
<feature type="disulfide bond" evidence="4">
    <location>
        <begin position="127"/>
        <end position="136"/>
    </location>
</feature>
<feature type="disulfide bond" evidence="7">
    <location>
        <begin position="142"/>
        <end position="182"/>
    </location>
</feature>
<feature type="disulfide bond" evidence="7">
    <location>
        <begin position="168"/>
        <end position="195"/>
    </location>
</feature>
<feature type="disulfide bond" evidence="7">
    <location>
        <begin position="199"/>
        <end position="241"/>
    </location>
</feature>
<feature type="disulfide bond" evidence="7">
    <location>
        <begin position="227"/>
        <end position="254"/>
    </location>
</feature>
<feature type="disulfide bond" evidence="7">
    <location>
        <begin position="260"/>
        <end position="308"/>
    </location>
</feature>
<feature type="disulfide bond" evidence="7">
    <location>
        <begin position="294"/>
        <end position="321"/>
    </location>
</feature>
<feature type="disulfide bond" evidence="5">
    <location>
        <begin position="331"/>
        <end position="350"/>
    </location>
</feature>
<feature type="disulfide bond" evidence="5">
    <location>
        <begin position="354"/>
        <end position="374"/>
    </location>
</feature>
<feature type="disulfide bond" evidence="3">
    <location>
        <begin position="464"/>
        <end position="564"/>
    </location>
</feature>
<feature type="disulfide bond" evidence="3">
    <location>
        <begin position="538"/>
        <end position="556"/>
    </location>
</feature>
<feature type="disulfide bond" evidence="7">
    <location>
        <begin position="576"/>
        <end position="621"/>
    </location>
</feature>
<feature type="disulfide bond" evidence="7">
    <location>
        <begin position="607"/>
        <end position="634"/>
    </location>
</feature>
<feature type="disulfide bond" evidence="7">
    <location>
        <begin position="720"/>
        <end position="748"/>
    </location>
</feature>
<feature type="disulfide bond" evidence="6">
    <location>
        <begin position="794"/>
        <end position="810"/>
    </location>
</feature>
<feature type="disulfide bond" evidence="6">
    <location>
        <begin position="932"/>
        <end position="951"/>
    </location>
</feature>
<feature type="disulfide bond" evidence="6">
    <location>
        <begin position="962"/>
        <end position="996"/>
    </location>
</feature>
<feature type="splice variant" id="VSP_005413" description="In isoform Short." evidence="14">
    <original>LTTTWIG</original>
    <variation>TDNVTAT</variation>
    <location>
        <begin position="492"/>
        <end position="498"/>
    </location>
</feature>
<feature type="splice variant" id="VSP_005414" description="In isoform Short." evidence="14">
    <location>
        <begin position="499"/>
        <end position="1019"/>
    </location>
</feature>
<sequence>MVLASFLVSGLVLGILAQQMRPVQSRGVDLGLCDETRFECKCGDPGYVFNVPMKQCTYFYRWRPYCKPCDDLEAKDICPKYKRCQECKAGLDSCVTCPPNKYGTWCSGECQCKNGGICDQRTGACTCRDRYEGAHCEILKGCPLLPSDSQVQEVRNPPDNPQTIDYSCSPGFKLKGVARISCLPNGQWSSFPPKCIRECAKVSSPEHGKVNAPSGNMIEGATLRFSCDSPYYLIGQETLTCQGNGQWSGQIPQCKKLVFCPDLDPVNHAEHQVKIGVEQKYGQFPQGTEVTYTCSGNYFLMGFNTLKCNPDGSWSGSQPSCVKVADREVDCDSKAVDFLDDVGEPVRIHCPAGCSLTAGTVWGTAIYHELSSVCRAAIHAGKLPNSGGAVHVVNNGPYSDFLGSDLNGIKSEELKSLARSFRFDYVSSSTAGRSGCPDGWFEVEENCVYVTSKQRAWERAQGVCTNMAARLAVLDKDLIPSSLTETLRGKGLTTTWIGLHRLDAEKPFVWELMDRSNVVLNDNLTFWASGEPGNETNCVYLDIRDQLQPVWKTKSCFQPSSFACMMDLSDRNKAKCDDPGPLENGHATLHGQSIDGFYAGSSIRYSCEVLHYLSGTETVTCTTNGTWSAPKPRCIKVITCQNPPVPSYGSVEIKPPSRTNSISRVGSPFLRLPRLPLPLARAAKPPPKPRSSQPSTVDLASKVKLPEGHYRVGSRAIYTCESRYYELLGSQGRRCDSNGNWSGRPASCIPVCGRSDSPRSPFIWNGNSTEIGQWPWQAGISRWLADHNMWFLQCGGSLLNEKWIVTAAHCVTYSATAEIIDPSQFKIYLGKYYRDDSRDDDYVQVREALEIHVNPNYDPGNLNFDIALIQLKTPVTLTTRVQPICLPTDITTREHLKEGTLAVVTGWGLNENNTYSEMIQQAVLPVVAASTCEEGYKEADLPLTVTENMFCAGYKKGRYDACSGDSGGPLVFADDSRTERRWVLEGIVSWGSPSGCGKANQYGGFTKVNVFLSWIRQFI</sequence>